<gene>
    <name evidence="1" type="primary">rpmJ1</name>
    <name type="ordered locus">EcE24377A_3782</name>
</gene>
<evidence type="ECO:0000255" key="1">
    <source>
        <dbReference type="HAMAP-Rule" id="MF_00251"/>
    </source>
</evidence>
<evidence type="ECO:0000305" key="2"/>
<organism>
    <name type="scientific">Escherichia coli O139:H28 (strain E24377A / ETEC)</name>
    <dbReference type="NCBI Taxonomy" id="331111"/>
    <lineage>
        <taxon>Bacteria</taxon>
        <taxon>Pseudomonadati</taxon>
        <taxon>Pseudomonadota</taxon>
        <taxon>Gammaproteobacteria</taxon>
        <taxon>Enterobacterales</taxon>
        <taxon>Enterobacteriaceae</taxon>
        <taxon>Escherichia</taxon>
    </lineage>
</organism>
<feature type="chain" id="PRO_0000344676" description="Large ribosomal subunit protein bL36A">
    <location>
        <begin position="1"/>
        <end position="38"/>
    </location>
</feature>
<name>RL361_ECO24</name>
<keyword id="KW-1185">Reference proteome</keyword>
<keyword id="KW-0687">Ribonucleoprotein</keyword>
<keyword id="KW-0689">Ribosomal protein</keyword>
<proteinExistence type="inferred from homology"/>
<accession>A7ZSI8</accession>
<dbReference type="EMBL" id="CP000800">
    <property type="protein sequence ID" value="ABV17184.1"/>
    <property type="molecule type" value="Genomic_DNA"/>
</dbReference>
<dbReference type="SMR" id="A7ZSI8"/>
<dbReference type="KEGG" id="ecw:EcE24377A_3782"/>
<dbReference type="HOGENOM" id="CLU_135723_6_2_6"/>
<dbReference type="Proteomes" id="UP000001122">
    <property type="component" value="Chromosome"/>
</dbReference>
<dbReference type="GO" id="GO:0005737">
    <property type="term" value="C:cytoplasm"/>
    <property type="evidence" value="ECO:0007669"/>
    <property type="project" value="UniProtKB-ARBA"/>
</dbReference>
<dbReference type="GO" id="GO:1990904">
    <property type="term" value="C:ribonucleoprotein complex"/>
    <property type="evidence" value="ECO:0007669"/>
    <property type="project" value="UniProtKB-KW"/>
</dbReference>
<dbReference type="GO" id="GO:0005840">
    <property type="term" value="C:ribosome"/>
    <property type="evidence" value="ECO:0007669"/>
    <property type="project" value="UniProtKB-KW"/>
</dbReference>
<dbReference type="GO" id="GO:0003735">
    <property type="term" value="F:structural constituent of ribosome"/>
    <property type="evidence" value="ECO:0007669"/>
    <property type="project" value="InterPro"/>
</dbReference>
<dbReference type="GO" id="GO:0006412">
    <property type="term" value="P:translation"/>
    <property type="evidence" value="ECO:0007669"/>
    <property type="project" value="UniProtKB-UniRule"/>
</dbReference>
<dbReference type="HAMAP" id="MF_00251">
    <property type="entry name" value="Ribosomal_bL36"/>
    <property type="match status" value="1"/>
</dbReference>
<dbReference type="InterPro" id="IPR000473">
    <property type="entry name" value="Ribosomal_bL36"/>
</dbReference>
<dbReference type="InterPro" id="IPR035977">
    <property type="entry name" value="Ribosomal_bL36_sp"/>
</dbReference>
<dbReference type="NCBIfam" id="TIGR01022">
    <property type="entry name" value="rpmJ_bact"/>
    <property type="match status" value="1"/>
</dbReference>
<dbReference type="PANTHER" id="PTHR42888">
    <property type="entry name" value="50S RIBOSOMAL PROTEIN L36, CHLOROPLASTIC"/>
    <property type="match status" value="1"/>
</dbReference>
<dbReference type="PANTHER" id="PTHR42888:SF1">
    <property type="entry name" value="LARGE RIBOSOMAL SUBUNIT PROTEIN BL36C"/>
    <property type="match status" value="1"/>
</dbReference>
<dbReference type="Pfam" id="PF00444">
    <property type="entry name" value="Ribosomal_L36"/>
    <property type="match status" value="1"/>
</dbReference>
<dbReference type="SUPFAM" id="SSF57840">
    <property type="entry name" value="Ribosomal protein L36"/>
    <property type="match status" value="1"/>
</dbReference>
<dbReference type="PROSITE" id="PS00828">
    <property type="entry name" value="RIBOSOMAL_L36"/>
    <property type="match status" value="1"/>
</dbReference>
<sequence>MKVRASVKKLCRNCKIVKRDGVIRVICSAEPKHKQRQG</sequence>
<protein>
    <recommendedName>
        <fullName evidence="1">Large ribosomal subunit protein bL36A</fullName>
    </recommendedName>
    <alternativeName>
        <fullName evidence="2">50S ribosomal protein L36 1</fullName>
    </alternativeName>
</protein>
<reference key="1">
    <citation type="journal article" date="2008" name="J. Bacteriol.">
        <title>The pangenome structure of Escherichia coli: comparative genomic analysis of E. coli commensal and pathogenic isolates.</title>
        <authorList>
            <person name="Rasko D.A."/>
            <person name="Rosovitz M.J."/>
            <person name="Myers G.S.A."/>
            <person name="Mongodin E.F."/>
            <person name="Fricke W.F."/>
            <person name="Gajer P."/>
            <person name="Crabtree J."/>
            <person name="Sebaihia M."/>
            <person name="Thomson N.R."/>
            <person name="Chaudhuri R."/>
            <person name="Henderson I.R."/>
            <person name="Sperandio V."/>
            <person name="Ravel J."/>
        </authorList>
    </citation>
    <scope>NUCLEOTIDE SEQUENCE [LARGE SCALE GENOMIC DNA]</scope>
    <source>
        <strain>E24377A / ETEC</strain>
    </source>
</reference>
<comment type="similarity">
    <text evidence="1">Belongs to the bacterial ribosomal protein bL36 family.</text>
</comment>